<accession>Q6XHX5</accession>
<accession>B4P5M1</accession>
<accession>Q6XIP4</accession>
<protein>
    <recommendedName>
        <fullName evidence="4">Small ribosomal subunit protein uS17</fullName>
    </recommendedName>
    <alternativeName>
        <fullName>40S ribosomal protein S11</fullName>
    </alternativeName>
</protein>
<organism>
    <name type="scientific">Drosophila yakuba</name>
    <name type="common">Fruit fly</name>
    <dbReference type="NCBI Taxonomy" id="7245"/>
    <lineage>
        <taxon>Eukaryota</taxon>
        <taxon>Metazoa</taxon>
        <taxon>Ecdysozoa</taxon>
        <taxon>Arthropoda</taxon>
        <taxon>Hexapoda</taxon>
        <taxon>Insecta</taxon>
        <taxon>Pterygota</taxon>
        <taxon>Neoptera</taxon>
        <taxon>Endopterygota</taxon>
        <taxon>Diptera</taxon>
        <taxon>Brachycera</taxon>
        <taxon>Muscomorpha</taxon>
        <taxon>Ephydroidea</taxon>
        <taxon>Drosophilidae</taxon>
        <taxon>Drosophila</taxon>
        <taxon>Sophophora</taxon>
    </lineage>
</organism>
<keyword id="KW-0007">Acetylation</keyword>
<keyword id="KW-0687">Ribonucleoprotein</keyword>
<keyword id="KW-0689">Ribosomal protein</keyword>
<keyword id="KW-0694">RNA-binding</keyword>
<keyword id="KW-0699">rRNA-binding</keyword>
<evidence type="ECO:0000250" key="1">
    <source>
        <dbReference type="UniProtKB" id="P62280"/>
    </source>
</evidence>
<evidence type="ECO:0000250" key="2">
    <source>
        <dbReference type="UniProtKB" id="Q0E9B6"/>
    </source>
</evidence>
<evidence type="ECO:0000255" key="3"/>
<evidence type="ECO:0000305" key="4"/>
<evidence type="ECO:0000312" key="5">
    <source>
        <dbReference type="EMBL" id="AAR10080.1"/>
    </source>
</evidence>
<reference evidence="5" key="1">
    <citation type="journal article" date="2003" name="Genome Res.">
        <title>An evolutionary analysis of orphan genes in Drosophila.</title>
        <authorList>
            <person name="Domazet-Loso T."/>
            <person name="Tautz D."/>
        </authorList>
    </citation>
    <scope>NUCLEOTIDE SEQUENCE [MRNA]</scope>
</reference>
<reference key="2">
    <citation type="journal article" date="2007" name="Nature">
        <title>Evolution of genes and genomes on the Drosophila phylogeny.</title>
        <authorList>
            <consortium name="Drosophila 12 genomes consortium"/>
        </authorList>
    </citation>
    <scope>NUCLEOTIDE SEQUENCE [LARGE SCALE GENOMIC DNA]</scope>
    <source>
        <strain>Tai18E2</strain>
    </source>
</reference>
<comment type="similarity">
    <text evidence="3">Belongs to the universal ribosomal protein uS17 family.</text>
</comment>
<proteinExistence type="evidence at transcript level"/>
<feature type="initiator methionine" description="Removed" evidence="1">
    <location>
        <position position="1"/>
    </location>
</feature>
<feature type="chain" id="PRO_0000282946" description="Small ribosomal subunit protein uS17" evidence="1">
    <location>
        <begin position="2"/>
        <end position="155"/>
    </location>
</feature>
<feature type="modified residue" description="N-acetylalanine" evidence="1">
    <location>
        <position position="2"/>
    </location>
</feature>
<dbReference type="EMBL" id="AY231785">
    <property type="protein sequence ID" value="AAR09808.1"/>
    <property type="molecule type" value="mRNA"/>
</dbReference>
<dbReference type="EMBL" id="AY232057">
    <property type="protein sequence ID" value="AAR10080.1"/>
    <property type="molecule type" value="mRNA"/>
</dbReference>
<dbReference type="EMBL" id="CM000158">
    <property type="protein sequence ID" value="EDW90818.2"/>
    <property type="molecule type" value="Genomic_DNA"/>
</dbReference>
<dbReference type="SMR" id="Q6XHX5"/>
<dbReference type="EnsemblMetazoa" id="FBtr0397021">
    <property type="protein sequence ID" value="FBpp0356179"/>
    <property type="gene ID" value="FBgn0068208"/>
</dbReference>
<dbReference type="EnsemblMetazoa" id="XM_002091070.3">
    <property type="protein sequence ID" value="XP_002091106.2"/>
    <property type="gene ID" value="LOC6530164"/>
</dbReference>
<dbReference type="GeneID" id="6530164"/>
<dbReference type="KEGG" id="dya:Dyak_GE13464"/>
<dbReference type="CTD" id="6205"/>
<dbReference type="eggNOG" id="KOG1728">
    <property type="taxonomic scope" value="Eukaryota"/>
</dbReference>
<dbReference type="OrthoDB" id="10254436at2759"/>
<dbReference type="ChiTaRS" id="RpS11">
    <property type="organism name" value="fly"/>
</dbReference>
<dbReference type="Proteomes" id="UP000002282">
    <property type="component" value="Chromosome 2R"/>
</dbReference>
<dbReference type="GO" id="GO:0022627">
    <property type="term" value="C:cytosolic small ribosomal subunit"/>
    <property type="evidence" value="ECO:0007669"/>
    <property type="project" value="TreeGrafter"/>
</dbReference>
<dbReference type="GO" id="GO:0000228">
    <property type="term" value="C:nuclear chromosome"/>
    <property type="evidence" value="ECO:0007669"/>
    <property type="project" value="EnsemblMetazoa"/>
</dbReference>
<dbReference type="GO" id="GO:0005730">
    <property type="term" value="C:nucleolus"/>
    <property type="evidence" value="ECO:0007669"/>
    <property type="project" value="EnsemblMetazoa"/>
</dbReference>
<dbReference type="GO" id="GO:0019843">
    <property type="term" value="F:rRNA binding"/>
    <property type="evidence" value="ECO:0007669"/>
    <property type="project" value="UniProtKB-KW"/>
</dbReference>
<dbReference type="GO" id="GO:0003735">
    <property type="term" value="F:structural constituent of ribosome"/>
    <property type="evidence" value="ECO:0007669"/>
    <property type="project" value="EnsemblMetazoa"/>
</dbReference>
<dbReference type="GO" id="GO:0006412">
    <property type="term" value="P:translation"/>
    <property type="evidence" value="ECO:0007669"/>
    <property type="project" value="InterPro"/>
</dbReference>
<dbReference type="CDD" id="cd00364">
    <property type="entry name" value="Ribosomal_uS17"/>
    <property type="match status" value="1"/>
</dbReference>
<dbReference type="FunFam" id="2.40.50.1000:FF:000002">
    <property type="entry name" value="40S ribosomal protein S11"/>
    <property type="match status" value="1"/>
</dbReference>
<dbReference type="Gene3D" id="2.40.50.1000">
    <property type="match status" value="1"/>
</dbReference>
<dbReference type="InterPro" id="IPR012340">
    <property type="entry name" value="NA-bd_OB-fold"/>
</dbReference>
<dbReference type="InterPro" id="IPR000266">
    <property type="entry name" value="Ribosomal_uS17"/>
</dbReference>
<dbReference type="InterPro" id="IPR028333">
    <property type="entry name" value="Ribosomal_uS17_arc/euk"/>
</dbReference>
<dbReference type="InterPro" id="IPR019979">
    <property type="entry name" value="Ribosomal_uS17_CS"/>
</dbReference>
<dbReference type="InterPro" id="IPR032440">
    <property type="entry name" value="Ribosomal_uS17_N"/>
</dbReference>
<dbReference type="NCBIfam" id="TIGR03630">
    <property type="entry name" value="uS17_arch"/>
    <property type="match status" value="1"/>
</dbReference>
<dbReference type="PANTHER" id="PTHR10744">
    <property type="entry name" value="40S RIBOSOMAL PROTEIN S11 FAMILY MEMBER"/>
    <property type="match status" value="1"/>
</dbReference>
<dbReference type="PANTHER" id="PTHR10744:SF9">
    <property type="entry name" value="40S RIBOSOMAL PROTEIN S11-RELATED"/>
    <property type="match status" value="1"/>
</dbReference>
<dbReference type="Pfam" id="PF00366">
    <property type="entry name" value="Ribosomal_S17"/>
    <property type="match status" value="1"/>
</dbReference>
<dbReference type="Pfam" id="PF16205">
    <property type="entry name" value="Ribosomal_S17_N"/>
    <property type="match status" value="1"/>
</dbReference>
<dbReference type="PRINTS" id="PR00973">
    <property type="entry name" value="RIBOSOMALS17"/>
</dbReference>
<dbReference type="SUPFAM" id="SSF50249">
    <property type="entry name" value="Nucleic acid-binding proteins"/>
    <property type="match status" value="1"/>
</dbReference>
<dbReference type="PROSITE" id="PS00056">
    <property type="entry name" value="RIBOSOMAL_S17"/>
    <property type="match status" value="1"/>
</dbReference>
<sequence length="155" mass="18105">MADQNERAFQKQFGVNLNRKVKPGITKKKLLRRSRDVGLGFKTPREAIDGTYIDKKCPWTGDVRIRGRILTGVVRKAKMQRTIVIRRDYLHFVRKYSRFEKRHRNMSVHCSPVFRDVEHGDIVTIGECRPLSKTVRFNVLKVSKGQGAKKSFKKY</sequence>
<gene>
    <name evidence="2" type="primary">RpS11</name>
    <name type="ORF">GE13464</name>
</gene>
<name>RS11_DROYA</name>